<protein>
    <recommendedName>
        <fullName>Protein translocase subunit SecY</fullName>
    </recommendedName>
    <alternativeName>
        <fullName>Protein transport protein SEC61 subunit alpha homolog</fullName>
    </alternativeName>
</protein>
<feature type="chain" id="PRO_0000131768" description="Protein translocase subunit SecY">
    <location>
        <begin position="1"/>
        <end position="468"/>
    </location>
</feature>
<feature type="topological domain" description="Cytoplasmic">
    <location>
        <begin position="1"/>
        <end position="33"/>
    </location>
</feature>
<feature type="transmembrane region" description="Helical; Name=Helix 1">
    <location>
        <begin position="34"/>
        <end position="48"/>
    </location>
</feature>
<feature type="topological domain" description="Extracellular">
    <location>
        <begin position="49"/>
        <end position="57"/>
    </location>
</feature>
<feature type="transmembrane region" description="Discontinuously helical; Name=Helix 2">
    <location>
        <begin position="58"/>
        <end position="88"/>
    </location>
</feature>
<feature type="intramembrane region" description="Helical; Name=Helix 2A">
    <location>
        <begin position="58"/>
        <end position="71"/>
    </location>
</feature>
<feature type="intramembrane region">
    <location>
        <position position="72"/>
    </location>
</feature>
<feature type="intramembrane region" description="Helical; Name=Helix 2B">
    <location>
        <begin position="73"/>
        <end position="88"/>
    </location>
</feature>
<feature type="topological domain" description="Cytoplasmic">
    <location>
        <begin position="89"/>
        <end position="115"/>
    </location>
</feature>
<feature type="transmembrane region" description="Helical; Name=Helix 3">
    <location>
        <begin position="116"/>
        <end position="130"/>
    </location>
</feature>
<feature type="topological domain" description="Extracellular">
    <location>
        <begin position="131"/>
        <end position="148"/>
    </location>
</feature>
<feature type="transmembrane region" description="Helical; Name=Helix 4">
    <location>
        <begin position="149"/>
        <end position="166"/>
    </location>
</feature>
<feature type="topological domain" description="Cytoplasmic">
    <location>
        <begin position="167"/>
        <end position="176"/>
    </location>
</feature>
<feature type="transmembrane region" description="Helical; Name=Helix 5">
    <location>
        <begin position="177"/>
        <end position="196"/>
    </location>
</feature>
<feature type="topological domain" description="Extracellular">
    <location>
        <begin position="197"/>
        <end position="239"/>
    </location>
</feature>
<feature type="transmembrane region" description="Helical; Name=Helix 6">
    <location>
        <begin position="240"/>
        <end position="257"/>
    </location>
</feature>
<feature type="topological domain" description="Cytoplasmic">
    <location>
        <begin position="258"/>
        <end position="285"/>
    </location>
</feature>
<feature type="transmembrane region" description="Helical; Name=Helix 7">
    <location>
        <begin position="286"/>
        <end position="303"/>
    </location>
</feature>
<feature type="topological domain" description="Extracellular">
    <location>
        <begin position="304"/>
        <end position="346"/>
    </location>
</feature>
<feature type="transmembrane region" description="Helical; Name=Helix 8">
    <location>
        <begin position="347"/>
        <end position="363"/>
    </location>
</feature>
<feature type="topological domain" description="Cytoplasmic">
    <location>
        <begin position="364"/>
        <end position="407"/>
    </location>
</feature>
<feature type="transmembrane region" description="Helical; Name=Helix 9">
    <location>
        <begin position="408"/>
        <end position="427"/>
    </location>
</feature>
<feature type="topological domain" description="Extracellular">
    <location>
        <position position="428"/>
    </location>
</feature>
<feature type="transmembrane region" description="Helical; Name=Helix 10">
    <location>
        <begin position="429"/>
        <end position="443"/>
    </location>
</feature>
<feature type="topological domain" description="Cytoplasmic">
    <location>
        <begin position="444"/>
        <end position="468"/>
    </location>
</feature>
<feature type="site" description="Pore ring">
    <location>
        <position position="78"/>
    </location>
</feature>
<feature type="site" description="Pore ring">
    <location>
        <position position="82"/>
    </location>
</feature>
<feature type="site" description="Pore ring">
    <location>
        <position position="177"/>
    </location>
</feature>
<feature type="site" description="Pore ring">
    <location>
        <position position="181"/>
    </location>
</feature>
<feature type="site" description="Pore ring">
    <location>
        <position position="291"/>
    </location>
</feature>
<feature type="site" description="Pore ring">
    <location>
        <position position="438"/>
    </location>
</feature>
<feature type="mutagenesis site" description="No longer complements secY24, an E.coli temperature-sensitive secY mutation." evidence="1">
    <location>
        <begin position="454"/>
        <end position="468"/>
    </location>
</feature>
<feature type="mutagenesis site" description="No longer complements secY24, an E.coli temperature-sensitive secY mutation." evidence="1">
    <original>FPA</original>
    <variation>PPP</variation>
    <location>
        <begin position="459"/>
        <end position="461"/>
    </location>
</feature>
<feature type="mutagenesis site" description="No longer complements secY24, an E.coli temperature-sensitive secY mutation." evidence="1">
    <original>RK</original>
    <variation>AA</variation>
    <location>
        <begin position="463"/>
        <end position="464"/>
    </location>
</feature>
<feature type="turn" evidence="3">
    <location>
        <begin position="27"/>
        <end position="29"/>
    </location>
</feature>
<feature type="helix" evidence="3">
    <location>
        <begin position="30"/>
        <end position="45"/>
    </location>
</feature>
<feature type="turn" evidence="3">
    <location>
        <begin position="62"/>
        <end position="66"/>
    </location>
</feature>
<feature type="helix" evidence="3">
    <location>
        <begin position="79"/>
        <end position="87"/>
    </location>
</feature>
<feature type="helix" evidence="3">
    <location>
        <begin position="115"/>
        <end position="131"/>
    </location>
</feature>
<feature type="strand" evidence="3">
    <location>
        <begin position="132"/>
        <end position="136"/>
    </location>
</feature>
<feature type="helix" evidence="3">
    <location>
        <begin position="147"/>
        <end position="171"/>
    </location>
</feature>
<feature type="strand" evidence="3">
    <location>
        <begin position="172"/>
        <end position="174"/>
    </location>
</feature>
<feature type="helix" evidence="3">
    <location>
        <begin position="176"/>
        <end position="193"/>
    </location>
</feature>
<feature type="strand" evidence="3">
    <location>
        <begin position="207"/>
        <end position="209"/>
    </location>
</feature>
<feature type="helix" evidence="3">
    <location>
        <begin position="215"/>
        <end position="225"/>
    </location>
</feature>
<feature type="strand" evidence="3">
    <location>
        <begin position="235"/>
        <end position="238"/>
    </location>
</feature>
<feature type="helix" evidence="3">
    <location>
        <begin position="241"/>
        <end position="259"/>
    </location>
</feature>
<feature type="strand" evidence="3">
    <location>
        <begin position="281"/>
        <end position="284"/>
    </location>
</feature>
<feature type="helix" evidence="3">
    <location>
        <begin position="287"/>
        <end position="307"/>
    </location>
</feature>
<feature type="strand" evidence="3">
    <location>
        <begin position="313"/>
        <end position="315"/>
    </location>
</feature>
<feature type="helix" evidence="3">
    <location>
        <begin position="329"/>
        <end position="331"/>
    </location>
</feature>
<feature type="strand" evidence="3">
    <location>
        <begin position="336"/>
        <end position="338"/>
    </location>
</feature>
<feature type="helix" evidence="3">
    <location>
        <begin position="340"/>
        <end position="343"/>
    </location>
</feature>
<feature type="helix" evidence="3">
    <location>
        <begin position="345"/>
        <end position="369"/>
    </location>
</feature>
<feature type="helix" evidence="3">
    <location>
        <begin position="374"/>
        <end position="376"/>
    </location>
</feature>
<feature type="turn" evidence="3">
    <location>
        <begin position="390"/>
        <end position="395"/>
    </location>
</feature>
<feature type="helix" evidence="3">
    <location>
        <begin position="409"/>
        <end position="427"/>
    </location>
</feature>
<feature type="helix" evidence="3">
    <location>
        <begin position="434"/>
        <end position="457"/>
    </location>
</feature>
<feature type="helix" evidence="3">
    <location>
        <begin position="459"/>
        <end position="464"/>
    </location>
</feature>
<gene>
    <name type="primary">secY</name>
    <name type="ordered locus">PF1801</name>
</gene>
<organism>
    <name type="scientific">Pyrococcus furiosus (strain ATCC 43587 / DSM 3638 / JCM 8422 / Vc1)</name>
    <dbReference type="NCBI Taxonomy" id="186497"/>
    <lineage>
        <taxon>Archaea</taxon>
        <taxon>Methanobacteriati</taxon>
        <taxon>Methanobacteriota</taxon>
        <taxon>Thermococci</taxon>
        <taxon>Thermococcales</taxon>
        <taxon>Thermococcaceae</taxon>
        <taxon>Pyrococcus</taxon>
    </lineage>
</organism>
<reference key="1">
    <citation type="journal article" date="1999" name="Genetics">
        <title>Divergence of the hyperthermophilic archaea Pyrococcus furiosus and P. horikoshii inferred from complete genomic sequences.</title>
        <authorList>
            <person name="Maeder D.L."/>
            <person name="Weiss R.B."/>
            <person name="Dunn D.M."/>
            <person name="Cherry J.L."/>
            <person name="Gonzalez J.M."/>
            <person name="DiRuggiero J."/>
            <person name="Robb F.T."/>
        </authorList>
    </citation>
    <scope>NUCLEOTIDE SEQUENCE [LARGE SCALE GENOMIC DNA]</scope>
    <source>
        <strain>ATCC 43587 / DSM 3638 / JCM 8422 / Vc1</strain>
    </source>
</reference>
<reference key="2">
    <citation type="journal article" date="2010" name="Proc. Natl. Acad. Sci. U.S.A.">
        <title>Lateral opening of a translocon upon entry of protein suggests the mechanism of insertion into membranes.</title>
        <authorList>
            <person name="Egea P.F."/>
            <person name="Stroud R.M."/>
        </authorList>
    </citation>
    <scope>X-RAY CRYSTALLOGRAPHY (2.9 ANGSTROMS) OF THE SECYE COMPLEX WITH AN OPEN LATERAL GATE</scope>
    <scope>SUBUNIT</scope>
    <scope>SUBCELLULAR LOCATION</scope>
    <scope>MUTAGENESIS OF 454-GLN--ALA-468; 459-PHE--ALA-461 AND 463-ARG-LYS-464</scope>
    <source>
        <strain>ATCC 43587 / DSM 3638 / JCM 8422 / Vc1</strain>
    </source>
</reference>
<keyword id="KW-0002">3D-structure</keyword>
<keyword id="KW-1003">Cell membrane</keyword>
<keyword id="KW-0472">Membrane</keyword>
<keyword id="KW-0653">Protein transport</keyword>
<keyword id="KW-1185">Reference proteome</keyword>
<keyword id="KW-0811">Translocation</keyword>
<keyword id="KW-0812">Transmembrane</keyword>
<keyword id="KW-1133">Transmembrane helix</keyword>
<keyword id="KW-0813">Transport</keyword>
<dbReference type="EMBL" id="AE009950">
    <property type="protein sequence ID" value="AAL81925.1"/>
    <property type="molecule type" value="Genomic_DNA"/>
</dbReference>
<dbReference type="RefSeq" id="WP_011012942.1">
    <property type="nucleotide sequence ID" value="NZ_CP023154.1"/>
</dbReference>
<dbReference type="PDB" id="3MP7">
    <property type="method" value="X-ray"/>
    <property type="resolution" value="2.90 A"/>
    <property type="chains" value="A=1-468"/>
</dbReference>
<dbReference type="PDBsum" id="3MP7"/>
<dbReference type="SMR" id="Q8U019"/>
<dbReference type="DIP" id="DIP-59389N"/>
<dbReference type="IntAct" id="Q8U019">
    <property type="interactions" value="2"/>
</dbReference>
<dbReference type="STRING" id="186497.PF1801"/>
<dbReference type="TCDB" id="3.A.5.7.2">
    <property type="family name" value="the general secretory pathway (sec) family"/>
</dbReference>
<dbReference type="PaxDb" id="186497-PF1801"/>
<dbReference type="GeneID" id="41713620"/>
<dbReference type="KEGG" id="pfu:PF1801"/>
<dbReference type="PATRIC" id="fig|186497.12.peg.1872"/>
<dbReference type="eggNOG" id="arCOG04169">
    <property type="taxonomic scope" value="Archaea"/>
</dbReference>
<dbReference type="HOGENOM" id="CLU_031763_3_0_2"/>
<dbReference type="OrthoDB" id="371914at2157"/>
<dbReference type="PhylomeDB" id="Q8U019"/>
<dbReference type="EvolutionaryTrace" id="Q8U019"/>
<dbReference type="Proteomes" id="UP000001013">
    <property type="component" value="Chromosome"/>
</dbReference>
<dbReference type="GO" id="GO:0005886">
    <property type="term" value="C:plasma membrane"/>
    <property type="evidence" value="ECO:0007669"/>
    <property type="project" value="UniProtKB-SubCell"/>
</dbReference>
<dbReference type="GO" id="GO:0065002">
    <property type="term" value="P:intracellular protein transmembrane transport"/>
    <property type="evidence" value="ECO:0007669"/>
    <property type="project" value="UniProtKB-UniRule"/>
</dbReference>
<dbReference type="GO" id="GO:0006605">
    <property type="term" value="P:protein targeting"/>
    <property type="evidence" value="ECO:0007669"/>
    <property type="project" value="UniProtKB-UniRule"/>
</dbReference>
<dbReference type="Gene3D" id="1.10.3370.10">
    <property type="entry name" value="SecY subunit domain"/>
    <property type="match status" value="1"/>
</dbReference>
<dbReference type="HAMAP" id="MF_01465">
    <property type="entry name" value="SecY"/>
    <property type="match status" value="1"/>
</dbReference>
<dbReference type="InterPro" id="IPR026593">
    <property type="entry name" value="SecY"/>
</dbReference>
<dbReference type="InterPro" id="IPR002208">
    <property type="entry name" value="SecY/SEC61-alpha"/>
</dbReference>
<dbReference type="InterPro" id="IPR030659">
    <property type="entry name" value="SecY_CS"/>
</dbReference>
<dbReference type="InterPro" id="IPR023201">
    <property type="entry name" value="SecY_dom_sf"/>
</dbReference>
<dbReference type="InterPro" id="IPR019561">
    <property type="entry name" value="Translocon_Sec61/SecY_plug_dom"/>
</dbReference>
<dbReference type="NCBIfam" id="TIGR00967">
    <property type="entry name" value="3a0501s007"/>
    <property type="match status" value="1"/>
</dbReference>
<dbReference type="NCBIfam" id="NF006341">
    <property type="entry name" value="PRK08568.1-5"/>
    <property type="match status" value="1"/>
</dbReference>
<dbReference type="PANTHER" id="PTHR10906">
    <property type="entry name" value="SECY/SEC61-ALPHA FAMILY MEMBER"/>
    <property type="match status" value="1"/>
</dbReference>
<dbReference type="Pfam" id="PF10559">
    <property type="entry name" value="Plug_translocon"/>
    <property type="match status" value="1"/>
</dbReference>
<dbReference type="Pfam" id="PF00344">
    <property type="entry name" value="SecY"/>
    <property type="match status" value="1"/>
</dbReference>
<dbReference type="PIRSF" id="PIRSF004557">
    <property type="entry name" value="SecY"/>
    <property type="match status" value="1"/>
</dbReference>
<dbReference type="PRINTS" id="PR00303">
    <property type="entry name" value="SECYTRNLCASE"/>
</dbReference>
<dbReference type="SUPFAM" id="SSF103491">
    <property type="entry name" value="Preprotein translocase SecY subunit"/>
    <property type="match status" value="1"/>
</dbReference>
<dbReference type="PROSITE" id="PS00755">
    <property type="entry name" value="SECY_1"/>
    <property type="match status" value="1"/>
</dbReference>
<dbReference type="PROSITE" id="PS00756">
    <property type="entry name" value="SECY_2"/>
    <property type="match status" value="1"/>
</dbReference>
<evidence type="ECO:0000269" key="1">
    <source>
    </source>
</evidence>
<evidence type="ECO:0000305" key="2"/>
<evidence type="ECO:0007829" key="3">
    <source>
        <dbReference type="PDB" id="3MP7"/>
    </source>
</evidence>
<proteinExistence type="evidence at protein level"/>
<accession>Q8U019</accession>
<sequence length="468" mass="52299">MGARDIIYALERWFPEVERPKRRVPLRERFMWTGVALILYYVLAEIPVYGIPERIQDYFQFLRVVLAGRNGSILTLGIGPIVTAGIILQLLVGSEIIKLDLANPEDRRFYQALQRVFSVFMCFFEAAVWILGGAFGRVGVDVTYAIAVLMILQLAMGGIVLIILDELVSKWGIGSGISLFIAAGVSQTILTRSLNPLTDPNIIDPLTGQPAIVGAIPYFIQHILKGDLWGAIYRGGSAPDMLSVVATIVVFFIVVYFESMRVEIPLGYRGVTVRGSYPIRFLYVSNIPIILTFALYANIQLWARVLDRLGHPWLGRFDPTTGSPISGFVLYVIPPRNIFSVIDNPVRAIVYLILTVIFSLLFGYLWVELTGLDARSIARQLQRAGLQIPGFRRDPRTLEKVLQRYIPYVTFWGSLTVALIAVLADFLGALGTGTGILLTVGILYRFYEEIAREQITEMFPALRKLFGA</sequence>
<name>SECY_PYRFU</name>
<comment type="function">
    <text>The central subunit of the protein translocation channel SecYEG. Consists of two halves formed by TMs 1-5 and 6-10. These two domains form a lateral gate at the front which open onto the bilayer between TMs 2 and 7, and are clamped together by SecE at the back. The channel is closed by both a pore ring composed of hydrophobic SecY resides and a short helix (helix 2A) on the extracellular side of the membrane which forms a plug. The plug probably moves laterally to allow the channel to open. The ring and the pore may move independently. Complements an E.coli temperature-sensitive secY mutation; deletion of the last 15 residues prevents complementation, which may indicate a role of this region in translocation.</text>
</comment>
<comment type="subunit">
    <text evidence="1">Component of the Sec protein translocase complex. Heterotrimer consisting of alpha (SecY), beta (SecG) and gamma (SecE) subunits. The heterotrimers can form oligomers, although 1 heterotrimer is thought to be able to translocate proteins. Interacts with the ribosome. May interact with SecDF, and other proteins may be involved. The beta subunit (SecG) was lost during crystallization.</text>
</comment>
<comment type="interaction">
    <interactant intactId="EBI-9025098">
        <id>Q8U019</id>
    </interactant>
    <interactant intactId="EBI-9025109">
        <id>Q8TZK2</id>
        <label>secE</label>
    </interactant>
    <organismsDiffer>false</organismsDiffer>
    <experiments>5</experiments>
</comment>
<comment type="subcellular location">
    <subcellularLocation>
        <location evidence="1">Cell membrane</location>
        <topology evidence="1">Multi-pass membrane protein</topology>
    </subcellularLocation>
</comment>
<comment type="similarity">
    <text evidence="2">Belongs to the SecY/SEC61-alpha family.</text>
</comment>